<name>M2_I60A0</name>
<evidence type="ECO:0000255" key="1">
    <source>
        <dbReference type="HAMAP-Rule" id="MF_04069"/>
    </source>
</evidence>
<evidence type="ECO:0000256" key="2">
    <source>
        <dbReference type="SAM" id="MobiDB-lite"/>
    </source>
</evidence>
<comment type="function">
    <text evidence="1">Forms a proton-selective ion channel that is necessary for the efficient release of the viral genome during virus entry. After attaching to the cell surface, the virion enters the cell by endocytosis. Acidification of the endosome triggers M2 ion channel activity. The influx of protons into virion interior is believed to disrupt interactions between the viral ribonucleoprotein (RNP), matrix protein 1 (M1), and lipid bilayers, thereby freeing the viral genome from interaction with viral proteins and enabling RNA segments to migrate to the host cell nucleus, where influenza virus RNA transcription and replication occur. Also plays a role in viral proteins secretory pathway. Elevates the intravesicular pH of normally acidic compartments, such as trans-Golgi network, preventing newly formed hemagglutinin from premature switching to the fusion-active conformation.</text>
</comment>
<comment type="activity regulation">
    <text>The M2 protein from most influenza A strains is inhibited by amantadine and rimantadine, resulting in viral uncoating incapacity. Emergence of amantadine-resistant variants is usually rapid.</text>
</comment>
<comment type="subunit">
    <text evidence="1">Homotetramer; composed of two disulfide-linked dimers held together by non-covalent interactions. May interact with matrix protein 1.</text>
</comment>
<comment type="subcellular location">
    <subcellularLocation>
        <location evidence="1">Virion membrane</location>
    </subcellularLocation>
    <subcellularLocation>
        <location evidence="1">Host apical cell membrane</location>
        <topology evidence="1">Single-pass type III membrane protein</topology>
    </subcellularLocation>
    <text evidence="1">Abundantly expressed at the apical plasma membrane in infected polarized epithelial cells, in close proximity to budding and assembled virions. Minor component of virions (only 16-20 molecules/virion).</text>
</comment>
<comment type="alternative products">
    <event type="alternative splicing"/>
    <isoform>
        <id>P21430-1</id>
        <name>M2</name>
        <sequence type="displayed"/>
    </isoform>
    <isoform>
        <id>P21429-1</id>
        <name>M1</name>
        <sequence type="external"/>
    </isoform>
    <text>Only the first 9 residues are shared by the 2 isoforms.</text>
</comment>
<comment type="domain">
    <text evidence="1">Cytoplasmic tail plays an important role in virion assembly and morphogenesis.</text>
</comment>
<comment type="miscellaneous">
    <text evidence="1">When the channel is activated, one or more imidazole moieties of His-37 probably become bi-protonated.</text>
</comment>
<comment type="similarity">
    <text evidence="1">Belongs to the influenza viruses matrix protein M2 family.</text>
</comment>
<reference key="1">
    <citation type="journal article" date="1988" name="Virology">
        <title>Identification of sequence changes in the cold-adapted, live attenuated influenza vaccine strain, A/Ann Arbor/6/60 (H2N2).</title>
        <authorList>
            <person name="Cox N.J."/>
            <person name="Kitame F."/>
            <person name="Kendal A.P."/>
            <person name="Maassab H.F."/>
            <person name="Naeve C."/>
        </authorList>
    </citation>
    <scope>NUCLEOTIDE SEQUENCE [GENOMIC RNA]</scope>
</reference>
<reference key="2">
    <citation type="journal article" date="2004" name="Virus Res.">
        <title>Assembly and budding of influenza virus.</title>
        <authorList>
            <person name="Nayak D.P."/>
            <person name="Hui E.K."/>
            <person name="Barman S."/>
        </authorList>
    </citation>
    <scope>REVIEW</scope>
</reference>
<reference key="3">
    <citation type="journal article" date="2003" name="FEBS Lett.">
        <title>Proton conduction through the M2 protein of the influenza A virus; a quantitative, mechanistic analysis of experimental data.</title>
        <authorList>
            <person name="Lear J.D."/>
        </authorList>
    </citation>
    <scope>REVIEW</scope>
</reference>
<reference key="4">
    <citation type="journal article" date="2003" name="FEBS Lett.">
        <title>Computational studies of proton transport through the M2 channel.</title>
        <authorList>
            <person name="Wu Y."/>
            <person name="Voth G.A."/>
        </authorList>
    </citation>
    <scope>REVIEW</scope>
</reference>
<organism>
    <name type="scientific">Influenza A virus (strain A/Ann Arbor/6/1960 H2N2)</name>
    <dbReference type="NCBI Taxonomy" id="384498"/>
    <lineage>
        <taxon>Viruses</taxon>
        <taxon>Riboviria</taxon>
        <taxon>Orthornavirae</taxon>
        <taxon>Negarnaviricota</taxon>
        <taxon>Polyploviricotina</taxon>
        <taxon>Insthoviricetes</taxon>
        <taxon>Articulavirales</taxon>
        <taxon>Orthomyxoviridae</taxon>
        <taxon>Alphainfluenzavirus</taxon>
        <taxon>Alphainfluenzavirus influenzae</taxon>
        <taxon>Influenza A virus</taxon>
    </lineage>
</organism>
<accession>P21430</accession>
<gene>
    <name evidence="1" type="primary">M</name>
</gene>
<protein>
    <recommendedName>
        <fullName evidence="1">Matrix protein 2</fullName>
    </recommendedName>
    <alternativeName>
        <fullName evidence="1">Proton channel protein M2</fullName>
    </alternativeName>
</protein>
<sequence length="97" mass="11166">MSLLTEVETPIRNEWGCRCNDSSDPLVVAASIIGILHLILWILDHLFFKCIYRFFKHGLKRGPSTEGVPESMREEYRKEQQSAVDADDSHFVSIELE</sequence>
<organismHost>
    <name type="scientific">Aves</name>
    <dbReference type="NCBI Taxonomy" id="8782"/>
</organismHost>
<organismHost>
    <name type="scientific">Homo sapiens</name>
    <name type="common">Human</name>
    <dbReference type="NCBI Taxonomy" id="9606"/>
</organismHost>
<dbReference type="EMBL" id="M23978">
    <property type="protein sequence ID" value="AAA43255.1"/>
    <property type="molecule type" value="Genomic_RNA"/>
</dbReference>
<dbReference type="SMR" id="P21430"/>
<dbReference type="IntAct" id="P21430">
    <property type="interactions" value="1"/>
</dbReference>
<dbReference type="DrugBank" id="DB00915">
    <property type="generic name" value="Amantadine"/>
</dbReference>
<dbReference type="DrugBank" id="DB00478">
    <property type="generic name" value="Rimantadine"/>
</dbReference>
<dbReference type="DrugCentral" id="P21430"/>
<dbReference type="GlyCosmos" id="P21430">
    <property type="glycosylation" value="1 site, No reported glycans"/>
</dbReference>
<dbReference type="GO" id="GO:0020002">
    <property type="term" value="C:host cell plasma membrane"/>
    <property type="evidence" value="ECO:0007669"/>
    <property type="project" value="UniProtKB-SubCell"/>
</dbReference>
<dbReference type="GO" id="GO:0016020">
    <property type="term" value="C:membrane"/>
    <property type="evidence" value="ECO:0007669"/>
    <property type="project" value="UniProtKB-UniRule"/>
</dbReference>
<dbReference type="GO" id="GO:0055036">
    <property type="term" value="C:virion membrane"/>
    <property type="evidence" value="ECO:0007669"/>
    <property type="project" value="UniProtKB-SubCell"/>
</dbReference>
<dbReference type="GO" id="GO:0005216">
    <property type="term" value="F:monoatomic ion channel activity"/>
    <property type="evidence" value="ECO:0007669"/>
    <property type="project" value="UniProtKB-UniRule"/>
</dbReference>
<dbReference type="GO" id="GO:0015078">
    <property type="term" value="F:proton transmembrane transporter activity"/>
    <property type="evidence" value="ECO:0007669"/>
    <property type="project" value="UniProtKB-UniRule"/>
</dbReference>
<dbReference type="GO" id="GO:0051259">
    <property type="term" value="P:protein complex oligomerization"/>
    <property type="evidence" value="ECO:0007669"/>
    <property type="project" value="UniProtKB-UniRule"/>
</dbReference>
<dbReference type="GO" id="GO:0044694">
    <property type="term" value="P:symbiont genome entry into host cell via pore formation in plasma membrane"/>
    <property type="evidence" value="ECO:0007669"/>
    <property type="project" value="UniProtKB-UniRule"/>
</dbReference>
<dbReference type="GO" id="GO:0140321">
    <property type="term" value="P:symbiont-mediated suppression of host autophagy"/>
    <property type="evidence" value="ECO:0007669"/>
    <property type="project" value="UniProtKB-KW"/>
</dbReference>
<dbReference type="Gene3D" id="6.10.250.1640">
    <property type="match status" value="1"/>
</dbReference>
<dbReference type="HAMAP" id="MF_04069">
    <property type="entry name" value="INFV_M2"/>
    <property type="match status" value="1"/>
</dbReference>
<dbReference type="InterPro" id="IPR002089">
    <property type="entry name" value="Flu_M2"/>
</dbReference>
<dbReference type="Pfam" id="PF00599">
    <property type="entry name" value="Flu_M2"/>
    <property type="match status" value="1"/>
</dbReference>
<proteinExistence type="inferred from homology"/>
<feature type="chain" id="PRO_0000078877" description="Matrix protein 2">
    <location>
        <begin position="1"/>
        <end position="97"/>
    </location>
</feature>
<feature type="topological domain" description="Virion surface" evidence="1">
    <location>
        <begin position="1"/>
        <end position="22"/>
    </location>
</feature>
<feature type="transmembrane region" description="Helical; Signal-anchor for type III membrane protein" evidence="1">
    <location>
        <begin position="23"/>
        <end position="43"/>
    </location>
</feature>
<feature type="topological domain" description="Intravirion" evidence="1">
    <location>
        <begin position="44"/>
        <end position="97"/>
    </location>
</feature>
<feature type="region of interest" description="Disordered" evidence="2">
    <location>
        <begin position="60"/>
        <end position="88"/>
    </location>
</feature>
<feature type="compositionally biased region" description="Basic and acidic residues" evidence="2">
    <location>
        <begin position="71"/>
        <end position="80"/>
    </location>
</feature>
<feature type="site" description="Essential for channel activity, possibly by being protonated during channel activation, and by forming the channel gate and the selective filter" evidence="1">
    <location>
        <position position="37"/>
    </location>
</feature>
<feature type="site" description="Seems to be involved in pH gating" evidence="1">
    <location>
        <position position="41"/>
    </location>
</feature>
<feature type="modified residue" description="Phosphoserine; by host" evidence="1">
    <location>
        <position position="64"/>
    </location>
</feature>
<feature type="modified residue" description="Phosphoserine; by host" evidence="1">
    <location>
        <position position="82"/>
    </location>
</feature>
<feature type="modified residue" description="Phosphoserine; by host" evidence="1">
    <location>
        <position position="93"/>
    </location>
</feature>
<feature type="lipid moiety-binding region" description="S-palmitoyl cysteine; by host" evidence="1">
    <location>
        <position position="50"/>
    </location>
</feature>
<feature type="glycosylation site" description="N-linked (GlcNAc...) asparagine; by host" evidence="1">
    <location>
        <position position="20"/>
    </location>
</feature>
<feature type="disulfide bond" description="Interchain (with C-17)" evidence="1">
    <location>
        <position position="17"/>
    </location>
</feature>
<feature type="disulfide bond" description="Interchain (with C-19)" evidence="1">
    <location>
        <position position="19"/>
    </location>
</feature>
<keyword id="KW-0025">Alternative splicing</keyword>
<keyword id="KW-1015">Disulfide bond</keyword>
<keyword id="KW-0325">Glycoprotein</keyword>
<keyword id="KW-1032">Host cell membrane</keyword>
<keyword id="KW-1043">Host membrane</keyword>
<keyword id="KW-0945">Host-virus interaction</keyword>
<keyword id="KW-0375">Hydrogen ion transport</keyword>
<keyword id="KW-1083">Inhibition of host autophagy by virus</keyword>
<keyword id="KW-0407">Ion channel</keyword>
<keyword id="KW-0406">Ion transport</keyword>
<keyword id="KW-0449">Lipoprotein</keyword>
<keyword id="KW-0472">Membrane</keyword>
<keyword id="KW-0564">Palmitate</keyword>
<keyword id="KW-0597">Phosphoprotein</keyword>
<keyword id="KW-0735">Signal-anchor</keyword>
<keyword id="KW-0812">Transmembrane</keyword>
<keyword id="KW-1133">Transmembrane helix</keyword>
<keyword id="KW-0813">Transport</keyword>
<keyword id="KW-1182">Viral ion channel</keyword>
<keyword id="KW-0946">Virion</keyword>